<accession>A1XG09</accession>
<keyword id="KW-0004">4Fe-4S</keyword>
<keyword id="KW-0150">Chloroplast</keyword>
<keyword id="KW-0408">Iron</keyword>
<keyword id="KW-0411">Iron-sulfur</keyword>
<keyword id="KW-0472">Membrane</keyword>
<keyword id="KW-0479">Metal-binding</keyword>
<keyword id="KW-0520">NAD</keyword>
<keyword id="KW-0521">NADP</keyword>
<keyword id="KW-0934">Plastid</keyword>
<keyword id="KW-0618">Plastoquinone</keyword>
<keyword id="KW-0874">Quinone</keyword>
<keyword id="KW-0677">Repeat</keyword>
<keyword id="KW-0793">Thylakoid</keyword>
<keyword id="KW-1278">Translocase</keyword>
<feature type="chain" id="PRO_0000298582" description="NAD(P)H-quinone oxidoreductase subunit I, chloroplastic">
    <location>
        <begin position="1"/>
        <end position="179"/>
    </location>
</feature>
<feature type="domain" description="4Fe-4S ferredoxin-type 1" evidence="1">
    <location>
        <begin position="55"/>
        <end position="84"/>
    </location>
</feature>
<feature type="domain" description="4Fe-4S ferredoxin-type 2" evidence="1">
    <location>
        <begin position="95"/>
        <end position="124"/>
    </location>
</feature>
<feature type="binding site" evidence="1">
    <location>
        <position position="64"/>
    </location>
    <ligand>
        <name>[4Fe-4S] cluster</name>
        <dbReference type="ChEBI" id="CHEBI:49883"/>
        <label>1</label>
    </ligand>
</feature>
<feature type="binding site" evidence="1">
    <location>
        <position position="67"/>
    </location>
    <ligand>
        <name>[4Fe-4S] cluster</name>
        <dbReference type="ChEBI" id="CHEBI:49883"/>
        <label>1</label>
    </ligand>
</feature>
<feature type="binding site" evidence="1">
    <location>
        <position position="70"/>
    </location>
    <ligand>
        <name>[4Fe-4S] cluster</name>
        <dbReference type="ChEBI" id="CHEBI:49883"/>
        <label>1</label>
    </ligand>
</feature>
<feature type="binding site" evidence="1">
    <location>
        <position position="74"/>
    </location>
    <ligand>
        <name>[4Fe-4S] cluster</name>
        <dbReference type="ChEBI" id="CHEBI:49883"/>
        <label>2</label>
    </ligand>
</feature>
<feature type="binding site" evidence="1">
    <location>
        <position position="104"/>
    </location>
    <ligand>
        <name>[4Fe-4S] cluster</name>
        <dbReference type="ChEBI" id="CHEBI:49883"/>
        <label>2</label>
    </ligand>
</feature>
<feature type="binding site" evidence="1">
    <location>
        <position position="107"/>
    </location>
    <ligand>
        <name>[4Fe-4S] cluster</name>
        <dbReference type="ChEBI" id="CHEBI:49883"/>
        <label>2</label>
    </ligand>
</feature>
<feature type="binding site" evidence="1">
    <location>
        <position position="110"/>
    </location>
    <ligand>
        <name>[4Fe-4S] cluster</name>
        <dbReference type="ChEBI" id="CHEBI:49883"/>
        <label>2</label>
    </ligand>
</feature>
<feature type="binding site" evidence="1">
    <location>
        <position position="114"/>
    </location>
    <ligand>
        <name>[4Fe-4S] cluster</name>
        <dbReference type="ChEBI" id="CHEBI:49883"/>
        <label>1</label>
    </ligand>
</feature>
<geneLocation type="chloroplast"/>
<gene>
    <name evidence="1" type="primary">ndhI</name>
</gene>
<sequence>MFPMVTGFMNYGQQTVRAARYIGQSFMITLSHANRLPVTIQYPYEKSITSERFRGRIHFEFDKCIACEVCVRVCPIDLPVVDWRLETDIRKKRLLNYSIDFGICIFCGNCVEYCPTNCLSMTEEYELSTYDRHELNYNQIALGRLPMSVIGDYTVRTIMNSTQIKISMDKSLDSRTITN</sequence>
<evidence type="ECO:0000255" key="1">
    <source>
        <dbReference type="HAMAP-Rule" id="MF_01351"/>
    </source>
</evidence>
<proteinExistence type="inferred from homology"/>
<name>NDHI_NUPAD</name>
<comment type="function">
    <text evidence="1">NDH shuttles electrons from NAD(P)H:plastoquinone, via FMN and iron-sulfur (Fe-S) centers, to quinones in the photosynthetic chain and possibly in a chloroplast respiratory chain. The immediate electron acceptor for the enzyme in this species is believed to be plastoquinone. Couples the redox reaction to proton translocation, and thus conserves the redox energy in a proton gradient.</text>
</comment>
<comment type="catalytic activity">
    <reaction evidence="1">
        <text>a plastoquinone + NADH + (n+1) H(+)(in) = a plastoquinol + NAD(+) + n H(+)(out)</text>
        <dbReference type="Rhea" id="RHEA:42608"/>
        <dbReference type="Rhea" id="RHEA-COMP:9561"/>
        <dbReference type="Rhea" id="RHEA-COMP:9562"/>
        <dbReference type="ChEBI" id="CHEBI:15378"/>
        <dbReference type="ChEBI" id="CHEBI:17757"/>
        <dbReference type="ChEBI" id="CHEBI:57540"/>
        <dbReference type="ChEBI" id="CHEBI:57945"/>
        <dbReference type="ChEBI" id="CHEBI:62192"/>
    </reaction>
</comment>
<comment type="catalytic activity">
    <reaction evidence="1">
        <text>a plastoquinone + NADPH + (n+1) H(+)(in) = a plastoquinol + NADP(+) + n H(+)(out)</text>
        <dbReference type="Rhea" id="RHEA:42612"/>
        <dbReference type="Rhea" id="RHEA-COMP:9561"/>
        <dbReference type="Rhea" id="RHEA-COMP:9562"/>
        <dbReference type="ChEBI" id="CHEBI:15378"/>
        <dbReference type="ChEBI" id="CHEBI:17757"/>
        <dbReference type="ChEBI" id="CHEBI:57783"/>
        <dbReference type="ChEBI" id="CHEBI:58349"/>
        <dbReference type="ChEBI" id="CHEBI:62192"/>
    </reaction>
</comment>
<comment type="cofactor">
    <cofactor evidence="1">
        <name>[4Fe-4S] cluster</name>
        <dbReference type="ChEBI" id="CHEBI:49883"/>
    </cofactor>
    <text evidence="1">Binds 2 [4Fe-4S] clusters per subunit.</text>
</comment>
<comment type="subunit">
    <text evidence="1">NDH is composed of at least 16 different subunits, 5 of which are encoded in the nucleus.</text>
</comment>
<comment type="subcellular location">
    <subcellularLocation>
        <location evidence="1">Plastid</location>
        <location evidence="1">Chloroplast thylakoid membrane</location>
        <topology evidence="1">Peripheral membrane protein</topology>
    </subcellularLocation>
</comment>
<comment type="similarity">
    <text evidence="1">Belongs to the complex I 23 kDa subunit family.</text>
</comment>
<dbReference type="EC" id="7.1.1.-" evidence="1"/>
<dbReference type="EMBL" id="DQ354691">
    <property type="protein sequence ID" value="ABC60513.1"/>
    <property type="molecule type" value="Genomic_DNA"/>
</dbReference>
<dbReference type="RefSeq" id="YP_001001588.1">
    <property type="nucleotide sequence ID" value="NC_008788.1"/>
</dbReference>
<dbReference type="SMR" id="A1XG09"/>
<dbReference type="GeneID" id="4699610"/>
<dbReference type="GO" id="GO:0009535">
    <property type="term" value="C:chloroplast thylakoid membrane"/>
    <property type="evidence" value="ECO:0007669"/>
    <property type="project" value="UniProtKB-SubCell"/>
</dbReference>
<dbReference type="GO" id="GO:0051539">
    <property type="term" value="F:4 iron, 4 sulfur cluster binding"/>
    <property type="evidence" value="ECO:0007669"/>
    <property type="project" value="UniProtKB-KW"/>
</dbReference>
<dbReference type="GO" id="GO:0005506">
    <property type="term" value="F:iron ion binding"/>
    <property type="evidence" value="ECO:0007669"/>
    <property type="project" value="UniProtKB-UniRule"/>
</dbReference>
<dbReference type="GO" id="GO:0008137">
    <property type="term" value="F:NADH dehydrogenase (ubiquinone) activity"/>
    <property type="evidence" value="ECO:0007669"/>
    <property type="project" value="InterPro"/>
</dbReference>
<dbReference type="GO" id="GO:0048038">
    <property type="term" value="F:quinone binding"/>
    <property type="evidence" value="ECO:0007669"/>
    <property type="project" value="UniProtKB-KW"/>
</dbReference>
<dbReference type="GO" id="GO:0019684">
    <property type="term" value="P:photosynthesis, light reaction"/>
    <property type="evidence" value="ECO:0007669"/>
    <property type="project" value="UniProtKB-UniRule"/>
</dbReference>
<dbReference type="FunFam" id="3.30.70.3270:FF:000006">
    <property type="entry name" value="NAD(P)H-quinone oxidoreductase subunit I, chloroplastic"/>
    <property type="match status" value="1"/>
</dbReference>
<dbReference type="Gene3D" id="3.30.70.3270">
    <property type="match status" value="1"/>
</dbReference>
<dbReference type="HAMAP" id="MF_01351">
    <property type="entry name" value="NDH1_NuoI"/>
    <property type="match status" value="1"/>
</dbReference>
<dbReference type="InterPro" id="IPR017896">
    <property type="entry name" value="4Fe4S_Fe-S-bd"/>
</dbReference>
<dbReference type="InterPro" id="IPR017900">
    <property type="entry name" value="4Fe4S_Fe_S_CS"/>
</dbReference>
<dbReference type="InterPro" id="IPR010226">
    <property type="entry name" value="NADH_quinone_OxRdtase_chainI"/>
</dbReference>
<dbReference type="InterPro" id="IPR004497">
    <property type="entry name" value="NDHI"/>
</dbReference>
<dbReference type="NCBIfam" id="TIGR00403">
    <property type="entry name" value="ndhI"/>
    <property type="match status" value="1"/>
</dbReference>
<dbReference type="NCBIfam" id="TIGR01971">
    <property type="entry name" value="NuoI"/>
    <property type="match status" value="1"/>
</dbReference>
<dbReference type="NCBIfam" id="NF004537">
    <property type="entry name" value="PRK05888.1-3"/>
    <property type="match status" value="1"/>
</dbReference>
<dbReference type="PANTHER" id="PTHR47275">
    <property type="entry name" value="NAD(P)H-QUINONE OXIDOREDUCTASE SUBUNIT I, CHLOROPLASTIC"/>
    <property type="match status" value="1"/>
</dbReference>
<dbReference type="PANTHER" id="PTHR47275:SF1">
    <property type="entry name" value="NAD(P)H-QUINONE OXIDOREDUCTASE SUBUNIT I, CHLOROPLASTIC"/>
    <property type="match status" value="1"/>
</dbReference>
<dbReference type="Pfam" id="PF12838">
    <property type="entry name" value="Fer4_7"/>
    <property type="match status" value="1"/>
</dbReference>
<dbReference type="SUPFAM" id="SSF54862">
    <property type="entry name" value="4Fe-4S ferredoxins"/>
    <property type="match status" value="1"/>
</dbReference>
<dbReference type="PROSITE" id="PS00198">
    <property type="entry name" value="4FE4S_FER_1"/>
    <property type="match status" value="2"/>
</dbReference>
<dbReference type="PROSITE" id="PS51379">
    <property type="entry name" value="4FE4S_FER_2"/>
    <property type="match status" value="2"/>
</dbReference>
<reference key="1">
    <citation type="journal article" date="2007" name="BMC Genomics">
        <title>Comparative chloroplast genomics: analyses including new sequences from the angiosperms Nuphar advena and Ranunculus macranthus.</title>
        <authorList>
            <person name="Raubeson L.A."/>
            <person name="Peery R."/>
            <person name="Chumley T.W."/>
            <person name="Dziubek C."/>
            <person name="Fourcade H.M."/>
            <person name="Boore J.L."/>
            <person name="Jansen R.K."/>
        </authorList>
    </citation>
    <scope>NUCLEOTIDE SEQUENCE [LARGE SCALE GENOMIC DNA]</scope>
</reference>
<protein>
    <recommendedName>
        <fullName evidence="1">NAD(P)H-quinone oxidoreductase subunit I, chloroplastic</fullName>
        <ecNumber evidence="1">7.1.1.-</ecNumber>
    </recommendedName>
    <alternativeName>
        <fullName evidence="1">NAD(P)H dehydrogenase subunit I</fullName>
        <shortName evidence="1">NDH subunit I</shortName>
    </alternativeName>
    <alternativeName>
        <fullName evidence="1">NADH-plastoquinone oxidoreductase subunit I</fullName>
    </alternativeName>
</protein>
<organism>
    <name type="scientific">Nuphar advena</name>
    <name type="common">Common spatterdock</name>
    <name type="synonym">Nuphar lutea subsp. advena</name>
    <dbReference type="NCBI Taxonomy" id="77108"/>
    <lineage>
        <taxon>Eukaryota</taxon>
        <taxon>Viridiplantae</taxon>
        <taxon>Streptophyta</taxon>
        <taxon>Embryophyta</taxon>
        <taxon>Tracheophyta</taxon>
        <taxon>Spermatophyta</taxon>
        <taxon>Magnoliopsida</taxon>
        <taxon>Nymphaeales</taxon>
        <taxon>Nymphaeaceae</taxon>
        <taxon>Nuphar</taxon>
    </lineage>
</organism>